<evidence type="ECO:0000255" key="1">
    <source>
        <dbReference type="HAMAP-Rule" id="MF_00061"/>
    </source>
</evidence>
<keyword id="KW-0067">ATP-binding</keyword>
<keyword id="KW-0414">Isoprene biosynthesis</keyword>
<keyword id="KW-0418">Kinase</keyword>
<keyword id="KW-0547">Nucleotide-binding</keyword>
<keyword id="KW-0808">Transferase</keyword>
<proteinExistence type="inferred from homology"/>
<accession>Q07I91</accession>
<name>ISPE_RHOP5</name>
<dbReference type="EC" id="2.7.1.148" evidence="1"/>
<dbReference type="EMBL" id="CP000463">
    <property type="protein sequence ID" value="ABJ08343.1"/>
    <property type="molecule type" value="Genomic_DNA"/>
</dbReference>
<dbReference type="SMR" id="Q07I91"/>
<dbReference type="STRING" id="316055.RPE_4419"/>
<dbReference type="KEGG" id="rpe:RPE_4419"/>
<dbReference type="eggNOG" id="COG1947">
    <property type="taxonomic scope" value="Bacteria"/>
</dbReference>
<dbReference type="HOGENOM" id="CLU_053057_1_0_5"/>
<dbReference type="OrthoDB" id="9809438at2"/>
<dbReference type="UniPathway" id="UPA00056">
    <property type="reaction ID" value="UER00094"/>
</dbReference>
<dbReference type="GO" id="GO:0050515">
    <property type="term" value="F:4-(cytidine 5'-diphospho)-2-C-methyl-D-erythritol kinase activity"/>
    <property type="evidence" value="ECO:0007669"/>
    <property type="project" value="UniProtKB-UniRule"/>
</dbReference>
<dbReference type="GO" id="GO:0005524">
    <property type="term" value="F:ATP binding"/>
    <property type="evidence" value="ECO:0007669"/>
    <property type="project" value="UniProtKB-UniRule"/>
</dbReference>
<dbReference type="GO" id="GO:0019288">
    <property type="term" value="P:isopentenyl diphosphate biosynthetic process, methylerythritol 4-phosphate pathway"/>
    <property type="evidence" value="ECO:0007669"/>
    <property type="project" value="UniProtKB-UniRule"/>
</dbReference>
<dbReference type="GO" id="GO:0016114">
    <property type="term" value="P:terpenoid biosynthetic process"/>
    <property type="evidence" value="ECO:0007669"/>
    <property type="project" value="InterPro"/>
</dbReference>
<dbReference type="Gene3D" id="3.30.230.10">
    <property type="match status" value="1"/>
</dbReference>
<dbReference type="Gene3D" id="3.30.70.890">
    <property type="entry name" value="GHMP kinase, C-terminal domain"/>
    <property type="match status" value="1"/>
</dbReference>
<dbReference type="HAMAP" id="MF_00061">
    <property type="entry name" value="IspE"/>
    <property type="match status" value="1"/>
</dbReference>
<dbReference type="InterPro" id="IPR013750">
    <property type="entry name" value="GHMP_kinase_C_dom"/>
</dbReference>
<dbReference type="InterPro" id="IPR036554">
    <property type="entry name" value="GHMP_kinase_C_sf"/>
</dbReference>
<dbReference type="InterPro" id="IPR006204">
    <property type="entry name" value="GHMP_kinase_N_dom"/>
</dbReference>
<dbReference type="InterPro" id="IPR004424">
    <property type="entry name" value="IspE"/>
</dbReference>
<dbReference type="InterPro" id="IPR020568">
    <property type="entry name" value="Ribosomal_Su5_D2-typ_SF"/>
</dbReference>
<dbReference type="InterPro" id="IPR014721">
    <property type="entry name" value="Ribsml_uS5_D2-typ_fold_subgr"/>
</dbReference>
<dbReference type="NCBIfam" id="TIGR00154">
    <property type="entry name" value="ispE"/>
    <property type="match status" value="1"/>
</dbReference>
<dbReference type="NCBIfam" id="NF011202">
    <property type="entry name" value="PRK14608.1"/>
    <property type="match status" value="1"/>
</dbReference>
<dbReference type="PANTHER" id="PTHR43527">
    <property type="entry name" value="4-DIPHOSPHOCYTIDYL-2-C-METHYL-D-ERYTHRITOL KINASE, CHLOROPLASTIC"/>
    <property type="match status" value="1"/>
</dbReference>
<dbReference type="PANTHER" id="PTHR43527:SF2">
    <property type="entry name" value="4-DIPHOSPHOCYTIDYL-2-C-METHYL-D-ERYTHRITOL KINASE, CHLOROPLASTIC"/>
    <property type="match status" value="1"/>
</dbReference>
<dbReference type="Pfam" id="PF08544">
    <property type="entry name" value="GHMP_kinases_C"/>
    <property type="match status" value="1"/>
</dbReference>
<dbReference type="Pfam" id="PF00288">
    <property type="entry name" value="GHMP_kinases_N"/>
    <property type="match status" value="1"/>
</dbReference>
<dbReference type="PIRSF" id="PIRSF010376">
    <property type="entry name" value="IspE"/>
    <property type="match status" value="1"/>
</dbReference>
<dbReference type="SUPFAM" id="SSF55060">
    <property type="entry name" value="GHMP Kinase, C-terminal domain"/>
    <property type="match status" value="1"/>
</dbReference>
<dbReference type="SUPFAM" id="SSF54211">
    <property type="entry name" value="Ribosomal protein S5 domain 2-like"/>
    <property type="match status" value="1"/>
</dbReference>
<comment type="function">
    <text evidence="1">Catalyzes the phosphorylation of the position 2 hydroxy group of 4-diphosphocytidyl-2C-methyl-D-erythritol.</text>
</comment>
<comment type="catalytic activity">
    <reaction evidence="1">
        <text>4-CDP-2-C-methyl-D-erythritol + ATP = 4-CDP-2-C-methyl-D-erythritol 2-phosphate + ADP + H(+)</text>
        <dbReference type="Rhea" id="RHEA:18437"/>
        <dbReference type="ChEBI" id="CHEBI:15378"/>
        <dbReference type="ChEBI" id="CHEBI:30616"/>
        <dbReference type="ChEBI" id="CHEBI:57823"/>
        <dbReference type="ChEBI" id="CHEBI:57919"/>
        <dbReference type="ChEBI" id="CHEBI:456216"/>
        <dbReference type="EC" id="2.7.1.148"/>
    </reaction>
</comment>
<comment type="pathway">
    <text evidence="1">Isoprenoid biosynthesis; isopentenyl diphosphate biosynthesis via DXP pathway; isopentenyl diphosphate from 1-deoxy-D-xylulose 5-phosphate: step 3/6.</text>
</comment>
<comment type="similarity">
    <text evidence="1">Belongs to the GHMP kinase family. IspE subfamily.</text>
</comment>
<gene>
    <name evidence="1" type="primary">ispE</name>
    <name type="ordered locus">RPE_4419</name>
</gene>
<reference key="1">
    <citation type="submission" date="2006-09" db="EMBL/GenBank/DDBJ databases">
        <title>Complete sequence of Rhodopseudomonas palustris BisA53.</title>
        <authorList>
            <consortium name="US DOE Joint Genome Institute"/>
            <person name="Copeland A."/>
            <person name="Lucas S."/>
            <person name="Lapidus A."/>
            <person name="Barry K."/>
            <person name="Detter J.C."/>
            <person name="Glavina del Rio T."/>
            <person name="Hammon N."/>
            <person name="Israni S."/>
            <person name="Dalin E."/>
            <person name="Tice H."/>
            <person name="Pitluck S."/>
            <person name="Chain P."/>
            <person name="Malfatti S."/>
            <person name="Shin M."/>
            <person name="Vergez L."/>
            <person name="Schmutz J."/>
            <person name="Larimer F."/>
            <person name="Land M."/>
            <person name="Hauser L."/>
            <person name="Pelletier D.A."/>
            <person name="Kyrpides N."/>
            <person name="Kim E."/>
            <person name="Harwood C.S."/>
            <person name="Oda Y."/>
            <person name="Richardson P."/>
        </authorList>
    </citation>
    <scope>NUCLEOTIDE SEQUENCE [LARGE SCALE GENOMIC DNA]</scope>
    <source>
        <strain>BisA53</strain>
    </source>
</reference>
<sequence>MTEVVTALSEQARAKVNLTLRVIGRRVDGYHELESVVVFADCADGLTLAPGQDLSLDASGPRVTECGDNADNLVIKAARLLAELVPGLKTGGFSLDKQLPIAAGIGGGSADAAAALRLLARSNGIALDDPRLMEAAKRTGADVPVCVASASCIMGGIGEKLTPLPLPRLSAVMVNPRVGVPTKDVFAALGLKNGQLNVGVTDVVAAPAWPDRDAPLGEWIAALSAGVNDLEAPAKQVQPVVGEVIALLAACDGALLARMSGSGATCFAIFGSDAEAKAAAQAIQRAHPNWWVHAGTLS</sequence>
<feature type="chain" id="PRO_1000075055" description="4-diphosphocytidyl-2-C-methyl-D-erythritol kinase">
    <location>
        <begin position="1"/>
        <end position="298"/>
    </location>
</feature>
<feature type="active site" evidence="1">
    <location>
        <position position="15"/>
    </location>
</feature>
<feature type="active site" evidence="1">
    <location>
        <position position="142"/>
    </location>
</feature>
<feature type="binding site" evidence="1">
    <location>
        <begin position="100"/>
        <end position="110"/>
    </location>
    <ligand>
        <name>ATP</name>
        <dbReference type="ChEBI" id="CHEBI:30616"/>
    </ligand>
</feature>
<organism>
    <name type="scientific">Rhodopseudomonas palustris (strain BisA53)</name>
    <dbReference type="NCBI Taxonomy" id="316055"/>
    <lineage>
        <taxon>Bacteria</taxon>
        <taxon>Pseudomonadati</taxon>
        <taxon>Pseudomonadota</taxon>
        <taxon>Alphaproteobacteria</taxon>
        <taxon>Hyphomicrobiales</taxon>
        <taxon>Nitrobacteraceae</taxon>
        <taxon>Rhodopseudomonas</taxon>
    </lineage>
</organism>
<protein>
    <recommendedName>
        <fullName evidence="1">4-diphosphocytidyl-2-C-methyl-D-erythritol kinase</fullName>
        <shortName evidence="1">CMK</shortName>
        <ecNumber evidence="1">2.7.1.148</ecNumber>
    </recommendedName>
    <alternativeName>
        <fullName evidence="1">4-(cytidine-5'-diphospho)-2-C-methyl-D-erythritol kinase</fullName>
    </alternativeName>
</protein>